<organism>
    <name type="scientific">Dehalococcoides mccartyi (strain ATCC BAA-2266 / KCTC 15142 / 195)</name>
    <name type="common">Dehalococcoides ethenogenes (strain 195)</name>
    <dbReference type="NCBI Taxonomy" id="243164"/>
    <lineage>
        <taxon>Bacteria</taxon>
        <taxon>Bacillati</taxon>
        <taxon>Chloroflexota</taxon>
        <taxon>Dehalococcoidia</taxon>
        <taxon>Dehalococcoidales</taxon>
        <taxon>Dehalococcoidaceae</taxon>
        <taxon>Dehalococcoides</taxon>
    </lineage>
</organism>
<gene>
    <name evidence="1" type="primary">atpH</name>
    <name type="ordered locus">DET0561</name>
</gene>
<proteinExistence type="inferred from homology"/>
<name>ATPD_DEHM1</name>
<keyword id="KW-0066">ATP synthesis</keyword>
<keyword id="KW-1003">Cell membrane</keyword>
<keyword id="KW-0139">CF(1)</keyword>
<keyword id="KW-0375">Hydrogen ion transport</keyword>
<keyword id="KW-0406">Ion transport</keyword>
<keyword id="KW-0472">Membrane</keyword>
<keyword id="KW-0813">Transport</keyword>
<evidence type="ECO:0000255" key="1">
    <source>
        <dbReference type="HAMAP-Rule" id="MF_01416"/>
    </source>
</evidence>
<sequence>MAKRVYAIAMRYAQALYELAKEQKSLDKWQEDLQDLSSLTEDASVAEFLSNPKIASARKHKVLAKLSNIDPLMLNLVDMLVATRRLGIMRAVSGEYNRLLNEARGVEDAIVTTAKPSSEADIEIIRQQLSKITGKKINVVTATDPGLIAGLKARIGDKLIDGSVSRRLVLLQNEISQGRI</sequence>
<protein>
    <recommendedName>
        <fullName evidence="1">ATP synthase subunit delta</fullName>
    </recommendedName>
    <alternativeName>
        <fullName evidence="1">ATP synthase F(1) sector subunit delta</fullName>
    </alternativeName>
    <alternativeName>
        <fullName evidence="1">F-type ATPase subunit delta</fullName>
        <shortName evidence="1">F-ATPase subunit delta</shortName>
    </alternativeName>
</protein>
<dbReference type="EMBL" id="CP000027">
    <property type="protein sequence ID" value="AAW40134.1"/>
    <property type="molecule type" value="Genomic_DNA"/>
</dbReference>
<dbReference type="RefSeq" id="WP_010936337.1">
    <property type="nucleotide sequence ID" value="NC_002936.3"/>
</dbReference>
<dbReference type="SMR" id="Q3Z8Z5"/>
<dbReference type="FunCoup" id="Q3Z8Z5">
    <property type="interactions" value="326"/>
</dbReference>
<dbReference type="STRING" id="243164.DET0561"/>
<dbReference type="GeneID" id="3230097"/>
<dbReference type="KEGG" id="det:DET0561"/>
<dbReference type="eggNOG" id="COG0712">
    <property type="taxonomic scope" value="Bacteria"/>
</dbReference>
<dbReference type="HOGENOM" id="CLU_085114_4_2_0"/>
<dbReference type="InParanoid" id="Q3Z8Z5"/>
<dbReference type="Proteomes" id="UP000008289">
    <property type="component" value="Chromosome"/>
</dbReference>
<dbReference type="GO" id="GO:0005886">
    <property type="term" value="C:plasma membrane"/>
    <property type="evidence" value="ECO:0007669"/>
    <property type="project" value="UniProtKB-SubCell"/>
</dbReference>
<dbReference type="GO" id="GO:0045259">
    <property type="term" value="C:proton-transporting ATP synthase complex"/>
    <property type="evidence" value="ECO:0007669"/>
    <property type="project" value="UniProtKB-KW"/>
</dbReference>
<dbReference type="GO" id="GO:0046933">
    <property type="term" value="F:proton-transporting ATP synthase activity, rotational mechanism"/>
    <property type="evidence" value="ECO:0007669"/>
    <property type="project" value="UniProtKB-UniRule"/>
</dbReference>
<dbReference type="Gene3D" id="1.10.520.20">
    <property type="entry name" value="N-terminal domain of the delta subunit of the F1F0-ATP synthase"/>
    <property type="match status" value="1"/>
</dbReference>
<dbReference type="HAMAP" id="MF_01416">
    <property type="entry name" value="ATP_synth_delta_bact"/>
    <property type="match status" value="1"/>
</dbReference>
<dbReference type="InterPro" id="IPR026015">
    <property type="entry name" value="ATP_synth_OSCP/delta_N_sf"/>
</dbReference>
<dbReference type="InterPro" id="IPR000711">
    <property type="entry name" value="ATPase_OSCP/dsu"/>
</dbReference>
<dbReference type="NCBIfam" id="TIGR01145">
    <property type="entry name" value="ATP_synt_delta"/>
    <property type="match status" value="1"/>
</dbReference>
<dbReference type="PANTHER" id="PTHR11910">
    <property type="entry name" value="ATP SYNTHASE DELTA CHAIN"/>
    <property type="match status" value="1"/>
</dbReference>
<dbReference type="Pfam" id="PF00213">
    <property type="entry name" value="OSCP"/>
    <property type="match status" value="1"/>
</dbReference>
<dbReference type="PRINTS" id="PR00125">
    <property type="entry name" value="ATPASEDELTA"/>
</dbReference>
<dbReference type="SUPFAM" id="SSF47928">
    <property type="entry name" value="N-terminal domain of the delta subunit of the F1F0-ATP synthase"/>
    <property type="match status" value="1"/>
</dbReference>
<comment type="function">
    <text evidence="1">F(1)F(0) ATP synthase produces ATP from ADP in the presence of a proton or sodium gradient. F-type ATPases consist of two structural domains, F(1) containing the extramembraneous catalytic core and F(0) containing the membrane proton channel, linked together by a central stalk and a peripheral stalk. During catalysis, ATP synthesis in the catalytic domain of F(1) is coupled via a rotary mechanism of the central stalk subunits to proton translocation.</text>
</comment>
<comment type="function">
    <text evidence="1">This protein is part of the stalk that links CF(0) to CF(1). It either transmits conformational changes from CF(0) to CF(1) or is implicated in proton conduction.</text>
</comment>
<comment type="subunit">
    <text evidence="1">F-type ATPases have 2 components, F(1) - the catalytic core - and F(0) - the membrane proton channel. F(1) has five subunits: alpha(3), beta(3), gamma(1), delta(1), epsilon(1). F(0) has three main subunits: a(1), b(2) and c(10-14). The alpha and beta chains form an alternating ring which encloses part of the gamma chain. F(1) is attached to F(0) by a central stalk formed by the gamma and epsilon chains, while a peripheral stalk is formed by the delta and b chains.</text>
</comment>
<comment type="subcellular location">
    <subcellularLocation>
        <location evidence="1">Cell membrane</location>
        <topology evidence="1">Peripheral membrane protein</topology>
    </subcellularLocation>
</comment>
<comment type="similarity">
    <text evidence="1">Belongs to the ATPase delta chain family.</text>
</comment>
<reference key="1">
    <citation type="journal article" date="2005" name="Science">
        <title>Genome sequence of the PCE-dechlorinating bacterium Dehalococcoides ethenogenes.</title>
        <authorList>
            <person name="Seshadri R."/>
            <person name="Adrian L."/>
            <person name="Fouts D.E."/>
            <person name="Eisen J.A."/>
            <person name="Phillippy A.M."/>
            <person name="Methe B.A."/>
            <person name="Ward N.L."/>
            <person name="Nelson W.C."/>
            <person name="DeBoy R.T."/>
            <person name="Khouri H.M."/>
            <person name="Kolonay J.F."/>
            <person name="Dodson R.J."/>
            <person name="Daugherty S.C."/>
            <person name="Brinkac L.M."/>
            <person name="Sullivan S.A."/>
            <person name="Madupu R."/>
            <person name="Nelson K.E."/>
            <person name="Kang K.H."/>
            <person name="Impraim M."/>
            <person name="Tran K."/>
            <person name="Robinson J.M."/>
            <person name="Forberger H.A."/>
            <person name="Fraser C.M."/>
            <person name="Zinder S.H."/>
            <person name="Heidelberg J.F."/>
        </authorList>
    </citation>
    <scope>NUCLEOTIDE SEQUENCE [LARGE SCALE GENOMIC DNA]</scope>
    <source>
        <strain>ATCC BAA-2266 / KCTC 15142 / 195</strain>
    </source>
</reference>
<accession>Q3Z8Z5</accession>
<feature type="chain" id="PRO_0000370959" description="ATP synthase subunit delta">
    <location>
        <begin position="1"/>
        <end position="180"/>
    </location>
</feature>